<dbReference type="EC" id="6.1.1.17" evidence="1"/>
<dbReference type="EMBL" id="CP000248">
    <property type="protein sequence ID" value="ABD25412.1"/>
    <property type="molecule type" value="Genomic_DNA"/>
</dbReference>
<dbReference type="RefSeq" id="WP_011444626.1">
    <property type="nucleotide sequence ID" value="NC_007794.1"/>
</dbReference>
<dbReference type="SMR" id="Q2G9R1"/>
<dbReference type="STRING" id="279238.Saro_0967"/>
<dbReference type="KEGG" id="nar:Saro_0967"/>
<dbReference type="eggNOG" id="COG0008">
    <property type="taxonomic scope" value="Bacteria"/>
</dbReference>
<dbReference type="HOGENOM" id="CLU_015768_6_1_5"/>
<dbReference type="Proteomes" id="UP000009134">
    <property type="component" value="Chromosome"/>
</dbReference>
<dbReference type="GO" id="GO:0005737">
    <property type="term" value="C:cytoplasm"/>
    <property type="evidence" value="ECO:0007669"/>
    <property type="project" value="UniProtKB-SubCell"/>
</dbReference>
<dbReference type="GO" id="GO:0005524">
    <property type="term" value="F:ATP binding"/>
    <property type="evidence" value="ECO:0007669"/>
    <property type="project" value="UniProtKB-UniRule"/>
</dbReference>
<dbReference type="GO" id="GO:0004818">
    <property type="term" value="F:glutamate-tRNA ligase activity"/>
    <property type="evidence" value="ECO:0007669"/>
    <property type="project" value="UniProtKB-UniRule"/>
</dbReference>
<dbReference type="GO" id="GO:0000049">
    <property type="term" value="F:tRNA binding"/>
    <property type="evidence" value="ECO:0007669"/>
    <property type="project" value="InterPro"/>
</dbReference>
<dbReference type="GO" id="GO:0006424">
    <property type="term" value="P:glutamyl-tRNA aminoacylation"/>
    <property type="evidence" value="ECO:0007669"/>
    <property type="project" value="UniProtKB-UniRule"/>
</dbReference>
<dbReference type="Gene3D" id="1.10.10.350">
    <property type="match status" value="1"/>
</dbReference>
<dbReference type="Gene3D" id="3.40.50.620">
    <property type="entry name" value="HUPs"/>
    <property type="match status" value="1"/>
</dbReference>
<dbReference type="HAMAP" id="MF_00022">
    <property type="entry name" value="Glu_tRNA_synth_type1"/>
    <property type="match status" value="1"/>
</dbReference>
<dbReference type="InterPro" id="IPR045462">
    <property type="entry name" value="aa-tRNA-synth_I_cd-bd"/>
</dbReference>
<dbReference type="InterPro" id="IPR020751">
    <property type="entry name" value="aa-tRNA-synth_I_codon-bd_sub2"/>
</dbReference>
<dbReference type="InterPro" id="IPR001412">
    <property type="entry name" value="aa-tRNA-synth_I_CS"/>
</dbReference>
<dbReference type="InterPro" id="IPR008925">
    <property type="entry name" value="aa_tRNA-synth_I_cd-bd_sf"/>
</dbReference>
<dbReference type="InterPro" id="IPR004527">
    <property type="entry name" value="Glu-tRNA-ligase_bac/mito"/>
</dbReference>
<dbReference type="InterPro" id="IPR000924">
    <property type="entry name" value="Glu/Gln-tRNA-synth"/>
</dbReference>
<dbReference type="InterPro" id="IPR020058">
    <property type="entry name" value="Glu/Gln-tRNA-synth_Ib_cat-dom"/>
</dbReference>
<dbReference type="InterPro" id="IPR049940">
    <property type="entry name" value="GluQ/Sye"/>
</dbReference>
<dbReference type="InterPro" id="IPR014729">
    <property type="entry name" value="Rossmann-like_a/b/a_fold"/>
</dbReference>
<dbReference type="NCBIfam" id="TIGR00464">
    <property type="entry name" value="gltX_bact"/>
    <property type="match status" value="1"/>
</dbReference>
<dbReference type="PANTHER" id="PTHR43311">
    <property type="entry name" value="GLUTAMATE--TRNA LIGASE"/>
    <property type="match status" value="1"/>
</dbReference>
<dbReference type="PANTHER" id="PTHR43311:SF2">
    <property type="entry name" value="GLUTAMATE--TRNA LIGASE, MITOCHONDRIAL-RELATED"/>
    <property type="match status" value="1"/>
</dbReference>
<dbReference type="Pfam" id="PF19269">
    <property type="entry name" value="Anticodon_2"/>
    <property type="match status" value="1"/>
</dbReference>
<dbReference type="Pfam" id="PF00749">
    <property type="entry name" value="tRNA-synt_1c"/>
    <property type="match status" value="1"/>
</dbReference>
<dbReference type="PRINTS" id="PR00987">
    <property type="entry name" value="TRNASYNTHGLU"/>
</dbReference>
<dbReference type="SUPFAM" id="SSF48163">
    <property type="entry name" value="An anticodon-binding domain of class I aminoacyl-tRNA synthetases"/>
    <property type="match status" value="1"/>
</dbReference>
<dbReference type="SUPFAM" id="SSF52374">
    <property type="entry name" value="Nucleotidylyl transferase"/>
    <property type="match status" value="1"/>
</dbReference>
<dbReference type="PROSITE" id="PS00178">
    <property type="entry name" value="AA_TRNA_LIGASE_I"/>
    <property type="match status" value="1"/>
</dbReference>
<reference key="1">
    <citation type="submission" date="2006-01" db="EMBL/GenBank/DDBJ databases">
        <title>Complete sequence of Novosphingobium aromaticivorans DSM 12444.</title>
        <authorList>
            <consortium name="US DOE Joint Genome Institute"/>
            <person name="Copeland A."/>
            <person name="Lucas S."/>
            <person name="Lapidus A."/>
            <person name="Barry K."/>
            <person name="Detter J.C."/>
            <person name="Glavina T."/>
            <person name="Hammon N."/>
            <person name="Israni S."/>
            <person name="Pitluck S."/>
            <person name="Chain P."/>
            <person name="Malfatti S."/>
            <person name="Shin M."/>
            <person name="Vergez L."/>
            <person name="Schmutz J."/>
            <person name="Larimer F."/>
            <person name="Land M."/>
            <person name="Kyrpides N."/>
            <person name="Ivanova N."/>
            <person name="Fredrickson J."/>
            <person name="Balkwill D."/>
            <person name="Romine M.F."/>
            <person name="Richardson P."/>
        </authorList>
    </citation>
    <scope>NUCLEOTIDE SEQUENCE [LARGE SCALE GENOMIC DNA]</scope>
    <source>
        <strain>ATCC 700278 / DSM 12444 / CCUG 56034 / CIP 105152 / NBRC 16084 / F199</strain>
    </source>
</reference>
<evidence type="ECO:0000255" key="1">
    <source>
        <dbReference type="HAMAP-Rule" id="MF_00022"/>
    </source>
</evidence>
<gene>
    <name evidence="1" type="primary">gltX1</name>
    <name type="ordered locus">Saro_0967</name>
</gene>
<comment type="function">
    <text evidence="1">Catalyzes the attachment of glutamate to tRNA(Glu) in a two-step reaction: glutamate is first activated by ATP to form Glu-AMP and then transferred to the acceptor end of tRNA(Glu).</text>
</comment>
<comment type="catalytic activity">
    <reaction evidence="1">
        <text>tRNA(Glu) + L-glutamate + ATP = L-glutamyl-tRNA(Glu) + AMP + diphosphate</text>
        <dbReference type="Rhea" id="RHEA:23540"/>
        <dbReference type="Rhea" id="RHEA-COMP:9663"/>
        <dbReference type="Rhea" id="RHEA-COMP:9680"/>
        <dbReference type="ChEBI" id="CHEBI:29985"/>
        <dbReference type="ChEBI" id="CHEBI:30616"/>
        <dbReference type="ChEBI" id="CHEBI:33019"/>
        <dbReference type="ChEBI" id="CHEBI:78442"/>
        <dbReference type="ChEBI" id="CHEBI:78520"/>
        <dbReference type="ChEBI" id="CHEBI:456215"/>
        <dbReference type="EC" id="6.1.1.17"/>
    </reaction>
</comment>
<comment type="subunit">
    <text evidence="1">Monomer.</text>
</comment>
<comment type="subcellular location">
    <subcellularLocation>
        <location evidence="1">Cytoplasm</location>
    </subcellularLocation>
</comment>
<comment type="similarity">
    <text evidence="1">Belongs to the class-I aminoacyl-tRNA synthetase family. Glutamate--tRNA ligase type 1 subfamily.</text>
</comment>
<proteinExistence type="inferred from homology"/>
<keyword id="KW-0030">Aminoacyl-tRNA synthetase</keyword>
<keyword id="KW-0067">ATP-binding</keyword>
<keyword id="KW-0963">Cytoplasm</keyword>
<keyword id="KW-0436">Ligase</keyword>
<keyword id="KW-0547">Nucleotide-binding</keyword>
<keyword id="KW-0648">Protein biosynthesis</keyword>
<keyword id="KW-1185">Reference proteome</keyword>
<feature type="chain" id="PRO_0000237380" description="Glutamate--tRNA ligase 1">
    <location>
        <begin position="1"/>
        <end position="442"/>
    </location>
</feature>
<feature type="short sequence motif" description="'HIGH' region" evidence="1">
    <location>
        <begin position="9"/>
        <end position="19"/>
    </location>
</feature>
<feature type="short sequence motif" description="'KMSKS' region" evidence="1">
    <location>
        <begin position="240"/>
        <end position="244"/>
    </location>
</feature>
<feature type="binding site" evidence="1">
    <location>
        <position position="243"/>
    </location>
    <ligand>
        <name>ATP</name>
        <dbReference type="ChEBI" id="CHEBI:30616"/>
    </ligand>
</feature>
<accession>Q2G9R1</accession>
<organism>
    <name type="scientific">Novosphingobium aromaticivorans (strain ATCC 700278 / DSM 12444 / CCUG 56034 / CIP 105152 / NBRC 16084 / F199)</name>
    <dbReference type="NCBI Taxonomy" id="279238"/>
    <lineage>
        <taxon>Bacteria</taxon>
        <taxon>Pseudomonadati</taxon>
        <taxon>Pseudomonadota</taxon>
        <taxon>Alphaproteobacteria</taxon>
        <taxon>Sphingomonadales</taxon>
        <taxon>Sphingomonadaceae</taxon>
        <taxon>Novosphingobium</taxon>
    </lineage>
</organism>
<sequence length="442" mass="48922">MATVTRFAPSPTGKLHVGNVRTALHNWLLAKKTGGRFLLRIDDTDAERSREEYVESIRADLQWLGLIPDGEERQSLRTELYEREFQRLVEAGRIYRAYETAQELDLKRKILLGRGLPPIYDRAALKLTEADHAAKAAAGERPHWRFLLDHDQPITWDDGIRGPQSFDPRQMSDPVIRRADGSWLYMLPSAIDDIAMGITDVLRGEDHVSNTATQIQMFTALGAEPPRFAHEALLTGSEGKLSKRLGALGMADFREQGIEPEAIVALLARLGTSDPVDAALDAAALATSFDLSRFGRAPARFDEADLHRVNAQIVHRLPYARVAHLLPQGMGEAAWEAIRPNLAHIDEARDWWNVVTGPVTAPTFDDETRAFLAQAAKTAASLDWSADPWRALTATLKDGTGRKGKALFLPLRQALTGHDHGPEMAALLPLIAQDEAVRRLSA</sequence>
<protein>
    <recommendedName>
        <fullName evidence="1">Glutamate--tRNA ligase 1</fullName>
        <ecNumber evidence="1">6.1.1.17</ecNumber>
    </recommendedName>
    <alternativeName>
        <fullName evidence="1">Glutamyl-tRNA synthetase 1</fullName>
        <shortName evidence="1">GluRS 1</shortName>
    </alternativeName>
</protein>
<name>SYE1_NOVAD</name>